<keyword id="KW-0153">Cholesterol metabolism</keyword>
<keyword id="KW-0274">FAD</keyword>
<keyword id="KW-0285">Flavoprotein</keyword>
<keyword id="KW-0413">Isomerase</keyword>
<keyword id="KW-0443">Lipid metabolism</keyword>
<keyword id="KW-0560">Oxidoreductase</keyword>
<keyword id="KW-1185">Reference proteome</keyword>
<keyword id="KW-0964">Secreted</keyword>
<keyword id="KW-0753">Steroid metabolism</keyword>
<keyword id="KW-1207">Sterol metabolism</keyword>
<keyword id="KW-0843">Virulence</keyword>
<gene>
    <name evidence="8" type="primary">choD</name>
    <name type="ordered locus">Rv3409c</name>
</gene>
<organism>
    <name type="scientific">Mycobacterium tuberculosis (strain ATCC 25618 / H37Rv)</name>
    <dbReference type="NCBI Taxonomy" id="83332"/>
    <lineage>
        <taxon>Bacteria</taxon>
        <taxon>Bacillati</taxon>
        <taxon>Actinomycetota</taxon>
        <taxon>Actinomycetes</taxon>
        <taxon>Mycobacteriales</taxon>
        <taxon>Mycobacteriaceae</taxon>
        <taxon>Mycobacterium</taxon>
        <taxon>Mycobacterium tuberculosis complex</taxon>
    </lineage>
</organism>
<name>CHOD_MYCTU</name>
<reference key="1">
    <citation type="submission" date="1996-07" db="EMBL/GenBank/DDBJ databases">
        <title>M.tuberculosis cholesterol oxidase.</title>
        <authorList>
            <person name="Av-Gay Y."/>
            <person name="Lim W."/>
            <person name="Davies J.E."/>
        </authorList>
    </citation>
    <scope>NUCLEOTIDE SEQUENCE [GENOMIC DNA]</scope>
</reference>
<reference key="2">
    <citation type="journal article" date="1998" name="Nature">
        <title>Deciphering the biology of Mycobacterium tuberculosis from the complete genome sequence.</title>
        <authorList>
            <person name="Cole S.T."/>
            <person name="Brosch R."/>
            <person name="Parkhill J."/>
            <person name="Garnier T."/>
            <person name="Churcher C.M."/>
            <person name="Harris D.E."/>
            <person name="Gordon S.V."/>
            <person name="Eiglmeier K."/>
            <person name="Gas S."/>
            <person name="Barry C.E. III"/>
            <person name="Tekaia F."/>
            <person name="Badcock K."/>
            <person name="Basham D."/>
            <person name="Brown D."/>
            <person name="Chillingworth T."/>
            <person name="Connor R."/>
            <person name="Davies R.M."/>
            <person name="Devlin K."/>
            <person name="Feltwell T."/>
            <person name="Gentles S."/>
            <person name="Hamlin N."/>
            <person name="Holroyd S."/>
            <person name="Hornsby T."/>
            <person name="Jagels K."/>
            <person name="Krogh A."/>
            <person name="McLean J."/>
            <person name="Moule S."/>
            <person name="Murphy L.D."/>
            <person name="Oliver S."/>
            <person name="Osborne J."/>
            <person name="Quail M.A."/>
            <person name="Rajandream M.A."/>
            <person name="Rogers J."/>
            <person name="Rutter S."/>
            <person name="Seeger K."/>
            <person name="Skelton S."/>
            <person name="Squares S."/>
            <person name="Squares R."/>
            <person name="Sulston J.E."/>
            <person name="Taylor K."/>
            <person name="Whitehead S."/>
            <person name="Barrell B.G."/>
        </authorList>
    </citation>
    <scope>NUCLEOTIDE SEQUENCE [LARGE SCALE GENOMIC DNA]</scope>
    <source>
        <strain>ATCC 25618 / H37Rv</strain>
    </source>
</reference>
<reference key="3">
    <citation type="journal article" date="2007" name="FEMS Microbiol. Lett.">
        <title>Cholesterol oxidase is required for virulence of Mycobacterium tuberculosis.</title>
        <authorList>
            <person name="Brzostek A."/>
            <person name="Dziadek B."/>
            <person name="Rumijowska-Galewicz A."/>
            <person name="Pawelczyk J."/>
            <person name="Dziadek J."/>
        </authorList>
    </citation>
    <scope>FUNCTION IN CHOLESTEROL DEGRADATION</scope>
    <scope>CATALYTIC ACTIVITY</scope>
    <scope>DISRUPTION PHENOTYPE</scope>
    <scope>PATHWAY</scope>
    <source>
        <strain>H37Ra</strain>
    </source>
</reference>
<reference key="4">
    <citation type="journal article" date="2011" name="Mol. Cell. Proteomics">
        <title>Proteogenomic analysis of Mycobacterium tuberculosis by high resolution mass spectrometry.</title>
        <authorList>
            <person name="Kelkar D.S."/>
            <person name="Kumar D."/>
            <person name="Kumar P."/>
            <person name="Balakrishnan L."/>
            <person name="Muthusamy B."/>
            <person name="Yadav A.K."/>
            <person name="Shrivastava P."/>
            <person name="Marimuthu A."/>
            <person name="Anand S."/>
            <person name="Sundaram H."/>
            <person name="Kingsbury R."/>
            <person name="Harsha H.C."/>
            <person name="Nair B."/>
            <person name="Prasad T.S."/>
            <person name="Chauhan D.S."/>
            <person name="Katoch K."/>
            <person name="Katoch V.M."/>
            <person name="Kumar P."/>
            <person name="Chaerkady R."/>
            <person name="Ramachandran S."/>
            <person name="Dash D."/>
            <person name="Pandey A."/>
        </authorList>
    </citation>
    <scope>IDENTIFICATION BY MASS SPECTROMETRY [LARGE SCALE ANALYSIS]</scope>
    <source>
        <strain>ATCC 25618 / H37Rv</strain>
    </source>
</reference>
<reference key="5">
    <citation type="journal article" date="2013" name="J. Steroid Biochem. Mol. Biol.">
        <title>ChoD and HsdD can be dispensable for cholesterol degradation in mycobacteria.</title>
        <authorList>
            <person name="Brzostek A."/>
            <person name="Rumijowska-Galewicz A."/>
            <person name="Dziadek B."/>
            <person name="Wojcik E.A."/>
            <person name="Dziadek J."/>
        </authorList>
    </citation>
    <scope>FUNCTION</scope>
    <scope>DISRUPTION PHENOTYPE</scope>
    <source>
        <strain>H37Rv</strain>
    </source>
</reference>
<reference key="6">
    <citation type="journal article" date="2013" name="PLoS ONE">
        <title>Cholesterol oxidase is indispensable in the pathogenesis of Mycobacterium tuberculosis.</title>
        <authorList>
            <person name="Klink M."/>
            <person name="Brzezinska M."/>
            <person name="Szulc I."/>
            <person name="Brzostek A."/>
            <person name="Kielbik M."/>
            <person name="Sulowska Z."/>
            <person name="Dziadek J."/>
        </authorList>
    </citation>
    <scope>FUNCTION IN VIRULENCE</scope>
    <scope>DISRUPTION PHENOTYPE</scope>
    <source>
        <strain>H37Rv</strain>
    </source>
</reference>
<reference key="7">
    <citation type="journal article" date="2019" name="Mediators Inflamm.">
        <title>Mycobacterium tuberculosis Requires Cholesterol Oxidase to Disrupt TLR2 Signalling in Human Macrophages.</title>
        <authorList>
            <person name="Szulc-Kielbik I."/>
            <person name="Kielbik M."/>
            <person name="Przygodzka P."/>
            <person name="Brzostek A."/>
            <person name="Dziadek J."/>
            <person name="Klink M."/>
        </authorList>
    </citation>
    <scope>FUNCTION IN VIRULENCE</scope>
    <scope>DISRUPTION PHENOTYPE</scope>
    <source>
        <strain>H37Rv</strain>
    </source>
</reference>
<reference key="8">
    <citation type="journal article" date="2020" name="Immunol. Lett.">
        <title>Determination of in vitro and in vivo immune response to recombinant cholesterol oxidase from Mycobacterium tuberculosis.</title>
        <authorList>
            <person name="Szulc-Kielbik I."/>
            <person name="Brzostek A."/>
            <person name="Gatkowska J."/>
            <person name="Kielbik M."/>
            <person name="Klink M."/>
        </authorList>
    </citation>
    <scope>FUNCTION IN VIRULENCE</scope>
    <scope>IMMUNOGENIC ACTIVITY</scope>
</reference>
<feature type="chain" id="PRO_0000405326" description="Cholesterol oxidase">
    <location>
        <begin position="1"/>
        <end position="578"/>
    </location>
</feature>
<feature type="region of interest" description="Disordered" evidence="2">
    <location>
        <begin position="529"/>
        <end position="551"/>
    </location>
</feature>
<feature type="compositionally biased region" description="Basic and acidic residues" evidence="2">
    <location>
        <begin position="533"/>
        <end position="546"/>
    </location>
</feature>
<feature type="active site" description="Proton acceptor" evidence="1">
    <location>
        <position position="470"/>
    </location>
</feature>
<feature type="binding site" evidence="1">
    <location>
        <position position="15"/>
    </location>
    <ligand>
        <name>FAD</name>
        <dbReference type="ChEBI" id="CHEBI:57692"/>
    </ligand>
</feature>
<feature type="binding site" evidence="1">
    <location>
        <position position="34"/>
    </location>
    <ligand>
        <name>FAD</name>
        <dbReference type="ChEBI" id="CHEBI:57692"/>
    </ligand>
</feature>
<feature type="binding site" evidence="1">
    <location>
        <position position="85"/>
    </location>
    <ligand>
        <name>FAD</name>
        <dbReference type="ChEBI" id="CHEBI:57692"/>
    </ligand>
</feature>
<feature type="binding site" evidence="1">
    <location>
        <position position="90"/>
    </location>
    <ligand>
        <name>FAD</name>
        <dbReference type="ChEBI" id="CHEBI:57692"/>
    </ligand>
</feature>
<feature type="binding site" evidence="1">
    <location>
        <position position="230"/>
    </location>
    <ligand>
        <name>FAD</name>
        <dbReference type="ChEBI" id="CHEBI:57692"/>
    </ligand>
</feature>
<feature type="binding site" evidence="1">
    <location>
        <position position="503"/>
    </location>
    <ligand>
        <name>FAD</name>
        <dbReference type="ChEBI" id="CHEBI:57692"/>
    </ligand>
</feature>
<dbReference type="EC" id="1.1.3.6" evidence="10"/>
<dbReference type="EC" id="5.3.3.1" evidence="10"/>
<dbReference type="EMBL" id="X99343">
    <property type="protein sequence ID" value="CAA67723.1"/>
    <property type="molecule type" value="Genomic_DNA"/>
</dbReference>
<dbReference type="EMBL" id="AL123456">
    <property type="protein sequence ID" value="CCP46231.1"/>
    <property type="molecule type" value="Genomic_DNA"/>
</dbReference>
<dbReference type="PIR" id="F70736">
    <property type="entry name" value="F70736"/>
</dbReference>
<dbReference type="RefSeq" id="NP_217926.1">
    <property type="nucleotide sequence ID" value="NC_000962.3"/>
</dbReference>
<dbReference type="RefSeq" id="WP_003418002.1">
    <property type="nucleotide sequence ID" value="NZ_NVQJ01000027.1"/>
</dbReference>
<dbReference type="SMR" id="P9WMV9"/>
<dbReference type="FunCoup" id="P9WMV9">
    <property type="interactions" value="12"/>
</dbReference>
<dbReference type="STRING" id="83332.Rv3409c"/>
<dbReference type="SwissLipids" id="SLP:000001277"/>
<dbReference type="PaxDb" id="83332-Rv3409c"/>
<dbReference type="DNASU" id="887502"/>
<dbReference type="GeneID" id="45427405"/>
<dbReference type="GeneID" id="887502"/>
<dbReference type="KEGG" id="mtu:Rv3409c"/>
<dbReference type="KEGG" id="mtv:RVBD_3409c"/>
<dbReference type="TubercuList" id="Rv3409c"/>
<dbReference type="eggNOG" id="COG2303">
    <property type="taxonomic scope" value="Bacteria"/>
</dbReference>
<dbReference type="InParanoid" id="P9WMV9"/>
<dbReference type="OrthoDB" id="517968at2"/>
<dbReference type="PhylomeDB" id="P9WMV9"/>
<dbReference type="BioCyc" id="MetaCyc:G185E-7686-MONOMER"/>
<dbReference type="BRENDA" id="1.1.3.6">
    <property type="organism ID" value="3445"/>
</dbReference>
<dbReference type="UniPathway" id="UPA01058"/>
<dbReference type="Proteomes" id="UP000001584">
    <property type="component" value="Chromosome"/>
</dbReference>
<dbReference type="GO" id="GO:0005576">
    <property type="term" value="C:extracellular region"/>
    <property type="evidence" value="ECO:0007669"/>
    <property type="project" value="UniProtKB-SubCell"/>
</dbReference>
<dbReference type="GO" id="GO:0016995">
    <property type="term" value="F:cholesterol oxidase activity"/>
    <property type="evidence" value="ECO:0000314"/>
    <property type="project" value="UniProtKB"/>
</dbReference>
<dbReference type="GO" id="GO:0050660">
    <property type="term" value="F:flavin adenine dinucleotide binding"/>
    <property type="evidence" value="ECO:0007669"/>
    <property type="project" value="InterPro"/>
</dbReference>
<dbReference type="GO" id="GO:0004769">
    <property type="term" value="F:steroid Delta-isomerase activity"/>
    <property type="evidence" value="ECO:0007669"/>
    <property type="project" value="UniProtKB-EC"/>
</dbReference>
<dbReference type="GO" id="GO:0006707">
    <property type="term" value="P:cholesterol catabolic process"/>
    <property type="evidence" value="ECO:0007669"/>
    <property type="project" value="UniProtKB-UniPathway"/>
</dbReference>
<dbReference type="FunFam" id="3.50.50.60:FF:000231">
    <property type="entry name" value="Cholesterol oxidase ChoD"/>
    <property type="match status" value="1"/>
</dbReference>
<dbReference type="FunFam" id="3.50.50.60:FF:000262">
    <property type="entry name" value="Cholesterol oxidase ChoD"/>
    <property type="match status" value="1"/>
</dbReference>
<dbReference type="FunFam" id="3.50.50.60:FF:000287">
    <property type="entry name" value="Cholesterol oxidase ChoD"/>
    <property type="match status" value="1"/>
</dbReference>
<dbReference type="Gene3D" id="3.50.50.60">
    <property type="entry name" value="FAD/NAD(P)-binding domain"/>
    <property type="match status" value="3"/>
</dbReference>
<dbReference type="InterPro" id="IPR052542">
    <property type="entry name" value="Cholesterol_Oxidase"/>
</dbReference>
<dbReference type="InterPro" id="IPR036188">
    <property type="entry name" value="FAD/NAD-bd_sf"/>
</dbReference>
<dbReference type="InterPro" id="IPR000172">
    <property type="entry name" value="GMC_OxRdtase_N"/>
</dbReference>
<dbReference type="InterPro" id="IPR007867">
    <property type="entry name" value="GMC_OxRtase_C"/>
</dbReference>
<dbReference type="PANTHER" id="PTHR47470">
    <property type="entry name" value="CHOLESTEROL OXIDASE"/>
    <property type="match status" value="1"/>
</dbReference>
<dbReference type="PANTHER" id="PTHR47470:SF1">
    <property type="entry name" value="FAD-DEPENDENT OXIDOREDUCTASE 2 FAD BINDING DOMAIN-CONTAINING PROTEIN"/>
    <property type="match status" value="1"/>
</dbReference>
<dbReference type="Pfam" id="PF05199">
    <property type="entry name" value="GMC_oxred_C"/>
    <property type="match status" value="1"/>
</dbReference>
<dbReference type="Pfam" id="PF00732">
    <property type="entry name" value="GMC_oxred_N"/>
    <property type="match status" value="1"/>
</dbReference>
<dbReference type="Pfam" id="PF13450">
    <property type="entry name" value="NAD_binding_8"/>
    <property type="match status" value="1"/>
</dbReference>
<dbReference type="SUPFAM" id="SSF51905">
    <property type="entry name" value="FAD/NAD(P)-binding domain"/>
    <property type="match status" value="1"/>
</dbReference>
<proteinExistence type="evidence at protein level"/>
<evidence type="ECO:0000250" key="1">
    <source>
        <dbReference type="UniProtKB" id="P12676"/>
    </source>
</evidence>
<evidence type="ECO:0000256" key="2">
    <source>
        <dbReference type="SAM" id="MobiDB-lite"/>
    </source>
</evidence>
<evidence type="ECO:0000269" key="3">
    <source>
    </source>
</evidence>
<evidence type="ECO:0000269" key="4">
    <source>
    </source>
</evidence>
<evidence type="ECO:0000269" key="5">
    <source>
    </source>
</evidence>
<evidence type="ECO:0000269" key="6">
    <source>
    </source>
</evidence>
<evidence type="ECO:0000269" key="7">
    <source>
    </source>
</evidence>
<evidence type="ECO:0000303" key="8">
    <source>
    </source>
</evidence>
<evidence type="ECO:0000305" key="9"/>
<evidence type="ECO:0000305" key="10">
    <source>
    </source>
</evidence>
<evidence type="ECO:0000305" key="11">
    <source>
    </source>
</evidence>
<accession>P9WMV9</accession>
<accession>L0TFA8</accession>
<accession>Q57307</accession>
<accession>Q799Z3</accession>
<accession>Q7D5K5</accession>
<protein>
    <recommendedName>
        <fullName evidence="8">Cholesterol oxidase</fullName>
        <ecNumber evidence="10">1.1.3.6</ecNumber>
    </recommendedName>
    <alternativeName>
        <fullName evidence="9">Cholesterol isomerase</fullName>
        <ecNumber evidence="10">5.3.3.1</ecNumber>
    </alternativeName>
</protein>
<comment type="function">
    <text evidence="3 4 5 6 7">Bifunctional enzyme that catalyzes the oxidation and isomerization of cholesterol to cholestenone (cholest-4-en-3-one), an initial step in the cholesterol degradation process (PubMed:17651430). Contributes to virulence (PubMed:17651430, PubMed:24039915, PubMed:31871425, PubMed:33166528). ChoD does not appear to play an essential role in cholesterol degradation in M.tuberculosis, and is probably important for pathogenesis not as a cholesterol-degrading enzyme, but rather as a virulence factor (PubMed:23064392). Required for interference with the host Toll-like receptor 2 (TLR2)-mediated signaling pathway and subsequent intracellular growth and survival of the pathogen in human macrophages (PubMed:24039915). Acts as a virulence factor that enables M.tuberculosis to disturb the TLR2-mediated signaling pathway in macrophages and modulate their immune response (PubMed:31871425). May favor Th2 and proinflammatory response rather than Th1 immune response in vivo (PubMed:33166528).</text>
</comment>
<comment type="catalytic activity">
    <reaction evidence="10">
        <text>cholesterol + O2 = cholest-5-en-3-one + H2O2</text>
        <dbReference type="Rhea" id="RHEA:32183"/>
        <dbReference type="ChEBI" id="CHEBI:15379"/>
        <dbReference type="ChEBI" id="CHEBI:16113"/>
        <dbReference type="ChEBI" id="CHEBI:16240"/>
        <dbReference type="ChEBI" id="CHEBI:63906"/>
        <dbReference type="EC" id="1.1.3.6"/>
    </reaction>
    <physiologicalReaction direction="left-to-right" evidence="10">
        <dbReference type="Rhea" id="RHEA:32184"/>
    </physiologicalReaction>
</comment>
<comment type="catalytic activity">
    <reaction evidence="10">
        <text>cholest-5-en-3-one = cholest-4-en-3-one</text>
        <dbReference type="Rhea" id="RHEA:32187"/>
        <dbReference type="ChEBI" id="CHEBI:16175"/>
        <dbReference type="ChEBI" id="CHEBI:63906"/>
        <dbReference type="EC" id="5.3.3.1"/>
    </reaction>
    <physiologicalReaction direction="left-to-right" evidence="10">
        <dbReference type="Rhea" id="RHEA:32188"/>
    </physiologicalReaction>
</comment>
<comment type="cofactor">
    <cofactor evidence="1">
        <name>FAD</name>
        <dbReference type="ChEBI" id="CHEBI:57692"/>
    </cofactor>
</comment>
<comment type="pathway">
    <text evidence="10">Steroid metabolism; cholesterol degradation.</text>
</comment>
<comment type="subcellular location">
    <subcellularLocation>
        <location evidence="11">Secreted</location>
    </subcellularLocation>
</comment>
<comment type="disruption phenotype">
    <text evidence="3 4 5 6">Mutants lacking choD, hsdD or both genes are able to grow in minimal media supplemented with cholesterol as a sole source of carbon and energy (PubMed:23064392). Mutant lacking this gene is attenuated in peritoneal macrophages, lungs and spleens of mice (PubMed:17651430). The deletion mutant shows less efficient intracellular replication in human macrophages (PubMed:24039915). In contrast to wild-type strain, the mutant induces nitric oxide (NO) production in macrophages (PubMed:24039915). It exhibits a significantly weakened ability to suppress reactive oxygen species (ROS) production by macrophages (PubMed:24039915). The production of interleukin 10 by macrophages is significantly lower (PubMed:24039915). Mutant lacking the gene has no effect on the IRAK4 and TRAF6 signaling proteins in human macrophages, regardless of the infection time (PubMed:31871425).</text>
</comment>
<comment type="miscellaneous">
    <text evidence="7">Can successfully induce the immune response both in vitro and in vivo.</text>
</comment>
<comment type="similarity">
    <text evidence="9">Belongs to the GMC oxidoreductase family.</text>
</comment>
<sequence>MKPDYDVLIIGSGFGGSVTALRLTEKGYRVGVLEAGRRFSDEEFAKTSWDLRKFLWAPRLGCYGIQRIHPLRNVMILAGAGVGGGSLNYANTLYVPPEPFFADQQWSHITDWRGELMPHYQQAQRMLGVVQNPTFTDADRIVKEVADEMGFGDTWVPTPVGVFFGPDGTKTPGKTVPDPYFGGAGPARTGCLECGCCMTGCRHGAKNTLVKNYLGLAESAGAQVIPMTTVKGFERRSDGLWEVRTVRTGSWLRRDRRTFTATQLVLAAGTWGTQHLLFKMRDRGRLPGLSKRLGVLTRTNSESIVGAATLKVNPDLDLTHGVAITSSIHPTADTHIEPVRYGKGSNAMGLLQTLMTDGSGPQGTDVPRWRQLLQTASQDPRGTIRMLNPRQWSERTVIALVMQHLDNSITTFTKRGKLGIRWYSSKQGHGEPNPTWIPIGNQVTRRIAAKIDGVAGGTWGELFNIPLTAHFLGGAVIGDDPEHGVIDPYHRVYGYPTLYVVDGAAISANLGVNPSLSIAAQAERAASLWPNKGETDRRPPQGEPYRRLAPIQPAHPVVPADAPGALRWLPIDPVSNAG</sequence>